<proteinExistence type="inferred from homology"/>
<organism>
    <name type="scientific">Pectobacterium atrosepticum (strain SCRI 1043 / ATCC BAA-672)</name>
    <name type="common">Erwinia carotovora subsp. atroseptica</name>
    <dbReference type="NCBI Taxonomy" id="218491"/>
    <lineage>
        <taxon>Bacteria</taxon>
        <taxon>Pseudomonadati</taxon>
        <taxon>Pseudomonadota</taxon>
        <taxon>Gammaproteobacteria</taxon>
        <taxon>Enterobacterales</taxon>
        <taxon>Pectobacteriaceae</taxon>
        <taxon>Pectobacterium</taxon>
    </lineage>
</organism>
<sequence>MSAFSEAINSLFSGHYADPFSLLGMHHSSKGLEVRALLPDADAAWVVDASNGRKIVELERVDGRGFFCGLVPNRKHDFHYQLAVTWREETWVIEDPYRFGPLLQDMDIWLLAEGTHLRPYERLGAHLETLDGVEGTRFAVWAPNAQRVSVVGQFNFWDGRRHPMRLRKENGIWELFLPDVKAGQLYKYEMIDSHGSVRLKADPYAFEAQMRPDTASLITPLPEKVPTNEARREANSLRSPISIYEVHLGSWRRHTDNNFWLSYQELANQLIDYVQYMGFTHVELMPINEHPFDGSWGYQPLGLYAPTRRFGTASDFRAFVDALHGAGINVLLDWVPGHFPGDEYGLAQFDGTALYEYSDPREGYHQDWNTLIYNYGRHEVRNYLAGNALFWMERYGIDGLRVDAVASMIYRDYSRSEGEWVPNHYGGKENLEAIAFLRYTNHTLGHAAPAAITLAEESTDYPGVTLPPDCNGLGFHYKWNMGWMHDTLTYMQLDPVHRKHHHDLLTFGMLYAYSENFVLPLSHDEVVHGKRSLLDRMPGDVWQKFANLRAYYGFMWAYPGKKLLFMGCEFAQGREWNHDASLDWHLLDEPEGWHRGVQALVRDLNHYYRQQPSLYQLDFQPQGFEWLVVDDRENSVFAFIRRDEQGNEVLVVSNFTPVPRYGYRIGINQPGGWREVMNTDSVHYNGSDQGNVGTIYSEEWGSHQRQHSLVLTIPPLATLYLVKEA</sequence>
<dbReference type="EC" id="2.4.1.18" evidence="1"/>
<dbReference type="EMBL" id="BX950851">
    <property type="protein sequence ID" value="CAG77048.1"/>
    <property type="molecule type" value="Genomic_DNA"/>
</dbReference>
<dbReference type="RefSeq" id="WP_011095622.1">
    <property type="nucleotide sequence ID" value="NC_004547.2"/>
</dbReference>
<dbReference type="SMR" id="Q6CZK0"/>
<dbReference type="STRING" id="218491.ECA4151"/>
<dbReference type="CAZy" id="CBM48">
    <property type="family name" value="Carbohydrate-Binding Module Family 48"/>
</dbReference>
<dbReference type="CAZy" id="GH13">
    <property type="family name" value="Glycoside Hydrolase Family 13"/>
</dbReference>
<dbReference type="GeneID" id="57210814"/>
<dbReference type="KEGG" id="eca:ECA4151"/>
<dbReference type="PATRIC" id="fig|218491.5.peg.4224"/>
<dbReference type="eggNOG" id="COG0296">
    <property type="taxonomic scope" value="Bacteria"/>
</dbReference>
<dbReference type="HOGENOM" id="CLU_004245_3_2_6"/>
<dbReference type="OrthoDB" id="9800174at2"/>
<dbReference type="UniPathway" id="UPA00164"/>
<dbReference type="Proteomes" id="UP000007966">
    <property type="component" value="Chromosome"/>
</dbReference>
<dbReference type="GO" id="GO:0005829">
    <property type="term" value="C:cytosol"/>
    <property type="evidence" value="ECO:0007669"/>
    <property type="project" value="TreeGrafter"/>
</dbReference>
<dbReference type="GO" id="GO:0003844">
    <property type="term" value="F:1,4-alpha-glucan branching enzyme activity"/>
    <property type="evidence" value="ECO:0007669"/>
    <property type="project" value="UniProtKB-UniRule"/>
</dbReference>
<dbReference type="GO" id="GO:0043169">
    <property type="term" value="F:cation binding"/>
    <property type="evidence" value="ECO:0007669"/>
    <property type="project" value="InterPro"/>
</dbReference>
<dbReference type="GO" id="GO:0004553">
    <property type="term" value="F:hydrolase activity, hydrolyzing O-glycosyl compounds"/>
    <property type="evidence" value="ECO:0007669"/>
    <property type="project" value="InterPro"/>
</dbReference>
<dbReference type="GO" id="GO:0005978">
    <property type="term" value="P:glycogen biosynthetic process"/>
    <property type="evidence" value="ECO:0007669"/>
    <property type="project" value="UniProtKB-UniRule"/>
</dbReference>
<dbReference type="CDD" id="cd11322">
    <property type="entry name" value="AmyAc_Glg_BE"/>
    <property type="match status" value="1"/>
</dbReference>
<dbReference type="CDD" id="cd02855">
    <property type="entry name" value="E_set_GBE_prok_N"/>
    <property type="match status" value="1"/>
</dbReference>
<dbReference type="FunFam" id="2.60.40.10:FF:000169">
    <property type="entry name" value="1,4-alpha-glucan branching enzyme GlgB"/>
    <property type="match status" value="1"/>
</dbReference>
<dbReference type="FunFam" id="2.60.40.1180:FF:000002">
    <property type="entry name" value="1,4-alpha-glucan branching enzyme GlgB"/>
    <property type="match status" value="1"/>
</dbReference>
<dbReference type="FunFam" id="3.20.20.80:FF:000003">
    <property type="entry name" value="1,4-alpha-glucan branching enzyme GlgB"/>
    <property type="match status" value="1"/>
</dbReference>
<dbReference type="Gene3D" id="3.20.20.80">
    <property type="entry name" value="Glycosidases"/>
    <property type="match status" value="1"/>
</dbReference>
<dbReference type="Gene3D" id="2.60.40.1180">
    <property type="entry name" value="Golgi alpha-mannosidase II"/>
    <property type="match status" value="1"/>
</dbReference>
<dbReference type="Gene3D" id="2.60.40.10">
    <property type="entry name" value="Immunoglobulins"/>
    <property type="match status" value="2"/>
</dbReference>
<dbReference type="HAMAP" id="MF_00685">
    <property type="entry name" value="GlgB"/>
    <property type="match status" value="1"/>
</dbReference>
<dbReference type="InterPro" id="IPR006048">
    <property type="entry name" value="A-amylase/branching_C"/>
</dbReference>
<dbReference type="InterPro" id="IPR037439">
    <property type="entry name" value="Branching_enzy"/>
</dbReference>
<dbReference type="InterPro" id="IPR006407">
    <property type="entry name" value="GlgB"/>
</dbReference>
<dbReference type="InterPro" id="IPR054169">
    <property type="entry name" value="GlgB_N"/>
</dbReference>
<dbReference type="InterPro" id="IPR044143">
    <property type="entry name" value="GlgB_N_E_set_prok"/>
</dbReference>
<dbReference type="InterPro" id="IPR006047">
    <property type="entry name" value="Glyco_hydro_13_cat_dom"/>
</dbReference>
<dbReference type="InterPro" id="IPR004193">
    <property type="entry name" value="Glyco_hydro_13_N"/>
</dbReference>
<dbReference type="InterPro" id="IPR013780">
    <property type="entry name" value="Glyco_hydro_b"/>
</dbReference>
<dbReference type="InterPro" id="IPR017853">
    <property type="entry name" value="Glycoside_hydrolase_SF"/>
</dbReference>
<dbReference type="InterPro" id="IPR013783">
    <property type="entry name" value="Ig-like_fold"/>
</dbReference>
<dbReference type="InterPro" id="IPR014756">
    <property type="entry name" value="Ig_E-set"/>
</dbReference>
<dbReference type="NCBIfam" id="TIGR01515">
    <property type="entry name" value="branching_enzym"/>
    <property type="match status" value="1"/>
</dbReference>
<dbReference type="NCBIfam" id="NF003811">
    <property type="entry name" value="PRK05402.1"/>
    <property type="match status" value="1"/>
</dbReference>
<dbReference type="NCBIfam" id="NF008967">
    <property type="entry name" value="PRK12313.1"/>
    <property type="match status" value="1"/>
</dbReference>
<dbReference type="PANTHER" id="PTHR43651">
    <property type="entry name" value="1,4-ALPHA-GLUCAN-BRANCHING ENZYME"/>
    <property type="match status" value="1"/>
</dbReference>
<dbReference type="PANTHER" id="PTHR43651:SF3">
    <property type="entry name" value="1,4-ALPHA-GLUCAN-BRANCHING ENZYME"/>
    <property type="match status" value="1"/>
</dbReference>
<dbReference type="Pfam" id="PF00128">
    <property type="entry name" value="Alpha-amylase"/>
    <property type="match status" value="1"/>
</dbReference>
<dbReference type="Pfam" id="PF02806">
    <property type="entry name" value="Alpha-amylase_C"/>
    <property type="match status" value="1"/>
</dbReference>
<dbReference type="Pfam" id="PF02922">
    <property type="entry name" value="CBM_48"/>
    <property type="match status" value="1"/>
</dbReference>
<dbReference type="Pfam" id="PF22019">
    <property type="entry name" value="GlgB_N"/>
    <property type="match status" value="1"/>
</dbReference>
<dbReference type="PIRSF" id="PIRSF000463">
    <property type="entry name" value="GlgB"/>
    <property type="match status" value="1"/>
</dbReference>
<dbReference type="SMART" id="SM00642">
    <property type="entry name" value="Aamy"/>
    <property type="match status" value="1"/>
</dbReference>
<dbReference type="SUPFAM" id="SSF51445">
    <property type="entry name" value="(Trans)glycosidases"/>
    <property type="match status" value="1"/>
</dbReference>
<dbReference type="SUPFAM" id="SSF81296">
    <property type="entry name" value="E set domains"/>
    <property type="match status" value="2"/>
</dbReference>
<dbReference type="SUPFAM" id="SSF51011">
    <property type="entry name" value="Glycosyl hydrolase domain"/>
    <property type="match status" value="1"/>
</dbReference>
<protein>
    <recommendedName>
        <fullName evidence="1">1,4-alpha-glucan branching enzyme GlgB</fullName>
        <ecNumber evidence="1">2.4.1.18</ecNumber>
    </recommendedName>
    <alternativeName>
        <fullName evidence="1">1,4-alpha-D-glucan:1,4-alpha-D-glucan 6-glucosyl-transferase</fullName>
    </alternativeName>
    <alternativeName>
        <fullName evidence="1">Alpha-(1-&gt;4)-glucan branching enzyme</fullName>
    </alternativeName>
    <alternativeName>
        <fullName evidence="1">Glycogen branching enzyme</fullName>
        <shortName evidence="1">BE</shortName>
    </alternativeName>
</protein>
<reference key="1">
    <citation type="journal article" date="2004" name="Proc. Natl. Acad. Sci. U.S.A.">
        <title>Genome sequence of the enterobacterial phytopathogen Erwinia carotovora subsp. atroseptica and characterization of virulence factors.</title>
        <authorList>
            <person name="Bell K.S."/>
            <person name="Sebaihia M."/>
            <person name="Pritchard L."/>
            <person name="Holden M.T.G."/>
            <person name="Hyman L.J."/>
            <person name="Holeva M.C."/>
            <person name="Thomson N.R."/>
            <person name="Bentley S.D."/>
            <person name="Churcher L.J.C."/>
            <person name="Mungall K."/>
            <person name="Atkin R."/>
            <person name="Bason N."/>
            <person name="Brooks K."/>
            <person name="Chillingworth T."/>
            <person name="Clark K."/>
            <person name="Doggett J."/>
            <person name="Fraser A."/>
            <person name="Hance Z."/>
            <person name="Hauser H."/>
            <person name="Jagels K."/>
            <person name="Moule S."/>
            <person name="Norbertczak H."/>
            <person name="Ormond D."/>
            <person name="Price C."/>
            <person name="Quail M.A."/>
            <person name="Sanders M."/>
            <person name="Walker D."/>
            <person name="Whitehead S."/>
            <person name="Salmond G.P.C."/>
            <person name="Birch P.R.J."/>
            <person name="Parkhill J."/>
            <person name="Toth I.K."/>
        </authorList>
    </citation>
    <scope>NUCLEOTIDE SEQUENCE [LARGE SCALE GENOMIC DNA]</scope>
    <source>
        <strain>SCRI 1043 / ATCC BAA-672</strain>
    </source>
</reference>
<evidence type="ECO:0000255" key="1">
    <source>
        <dbReference type="HAMAP-Rule" id="MF_00685"/>
    </source>
</evidence>
<comment type="function">
    <text evidence="1">Catalyzes the formation of the alpha-1,6-glucosidic linkages in glycogen by scission of a 1,4-alpha-linked oligosaccharide from growing alpha-1,4-glucan chains and the subsequent attachment of the oligosaccharide to the alpha-1,6 position.</text>
</comment>
<comment type="catalytic activity">
    <reaction evidence="1">
        <text>Transfers a segment of a (1-&gt;4)-alpha-D-glucan chain to a primary hydroxy group in a similar glucan chain.</text>
        <dbReference type="EC" id="2.4.1.18"/>
    </reaction>
</comment>
<comment type="pathway">
    <text evidence="1">Glycan biosynthesis; glycogen biosynthesis.</text>
</comment>
<comment type="subunit">
    <text evidence="1">Monomer.</text>
</comment>
<comment type="similarity">
    <text evidence="1">Belongs to the glycosyl hydrolase 13 family. GlgB subfamily.</text>
</comment>
<accession>Q6CZK0</accession>
<gene>
    <name evidence="1" type="primary">glgB</name>
    <name type="ordered locus">ECA4151</name>
</gene>
<name>GLGB_PECAS</name>
<keyword id="KW-0119">Carbohydrate metabolism</keyword>
<keyword id="KW-0320">Glycogen biosynthesis</keyword>
<keyword id="KW-0321">Glycogen metabolism</keyword>
<keyword id="KW-0328">Glycosyltransferase</keyword>
<keyword id="KW-1185">Reference proteome</keyword>
<keyword id="KW-0808">Transferase</keyword>
<feature type="chain" id="PRO_0000188706" description="1,4-alpha-glucan branching enzyme GlgB">
    <location>
        <begin position="1"/>
        <end position="725"/>
    </location>
</feature>
<feature type="active site" description="Nucleophile" evidence="1">
    <location>
        <position position="403"/>
    </location>
</feature>
<feature type="active site" description="Proton donor" evidence="1">
    <location>
        <position position="456"/>
    </location>
</feature>